<geneLocation type="chloroplast"/>
<name>ATPI_ORYNI</name>
<protein>
    <recommendedName>
        <fullName evidence="1">ATP synthase subunit a, chloroplastic</fullName>
    </recommendedName>
    <alternativeName>
        <fullName evidence="1">ATP synthase F0 sector subunit a</fullName>
    </alternativeName>
    <alternativeName>
        <fullName evidence="1">F-ATPase subunit IV</fullName>
    </alternativeName>
</protein>
<keyword id="KW-0066">ATP synthesis</keyword>
<keyword id="KW-0138">CF(0)</keyword>
<keyword id="KW-0150">Chloroplast</keyword>
<keyword id="KW-0375">Hydrogen ion transport</keyword>
<keyword id="KW-0406">Ion transport</keyword>
<keyword id="KW-0472">Membrane</keyword>
<keyword id="KW-0934">Plastid</keyword>
<keyword id="KW-1185">Reference proteome</keyword>
<keyword id="KW-0793">Thylakoid</keyword>
<keyword id="KW-0812">Transmembrane</keyword>
<keyword id="KW-1133">Transmembrane helix</keyword>
<keyword id="KW-0813">Transport</keyword>
<organism>
    <name type="scientific">Oryza nivara</name>
    <name type="common">Indian wild rice</name>
    <name type="synonym">Oryza sativa f. spontanea</name>
    <dbReference type="NCBI Taxonomy" id="4536"/>
    <lineage>
        <taxon>Eukaryota</taxon>
        <taxon>Viridiplantae</taxon>
        <taxon>Streptophyta</taxon>
        <taxon>Embryophyta</taxon>
        <taxon>Tracheophyta</taxon>
        <taxon>Spermatophyta</taxon>
        <taxon>Magnoliopsida</taxon>
        <taxon>Liliopsida</taxon>
        <taxon>Poales</taxon>
        <taxon>Poaceae</taxon>
        <taxon>BOP clade</taxon>
        <taxon>Oryzoideae</taxon>
        <taxon>Oryzeae</taxon>
        <taxon>Oryzinae</taxon>
        <taxon>Oryza</taxon>
    </lineage>
</organism>
<proteinExistence type="inferred from homology"/>
<reference key="1">
    <citation type="journal article" date="2004" name="Gene">
        <title>The complete nucleotide sequence of wild rice (Oryza nivara) chloroplast genome: first genome wide comparative sequence analysis of wild and cultivated rice.</title>
        <authorList>
            <person name="Masood M.S."/>
            <person name="Nishikawa T."/>
            <person name="Fukuoka S."/>
            <person name="Njenga P.K."/>
            <person name="Tsudzuki T."/>
            <person name="Kadowaki K."/>
        </authorList>
    </citation>
    <scope>NUCLEOTIDE SEQUENCE [LARGE SCALE GENOMIC DNA]</scope>
    <source>
        <strain evidence="2">cv. SL10</strain>
    </source>
</reference>
<comment type="function">
    <text evidence="1">Key component of the proton channel; it plays a direct role in the translocation of protons across the membrane.</text>
</comment>
<comment type="subunit">
    <text evidence="1">F-type ATPases have 2 components, CF(1) - the catalytic core - and CF(0) - the membrane proton channel. CF(1) has five subunits: alpha(3), beta(3), gamma(1), delta(1), epsilon(1). CF(0) has four main subunits: a, b, b' and c.</text>
</comment>
<comment type="subcellular location">
    <subcellularLocation>
        <location evidence="1">Plastid</location>
        <location evidence="1">Chloroplast thylakoid membrane</location>
        <topology evidence="1">Multi-pass membrane protein</topology>
    </subcellularLocation>
</comment>
<comment type="similarity">
    <text evidence="1">Belongs to the ATPase A chain family.</text>
</comment>
<dbReference type="EMBL" id="AP006728">
    <property type="protein sequence ID" value="BAD26772.1"/>
    <property type="molecule type" value="Genomic_DNA"/>
</dbReference>
<dbReference type="RefSeq" id="YP_052743.1">
    <property type="nucleotide sequence ID" value="NC_005973.1"/>
</dbReference>
<dbReference type="SMR" id="Q6ENI0"/>
<dbReference type="STRING" id="4536.Q6ENI0"/>
<dbReference type="GeneID" id="2885903"/>
<dbReference type="Proteomes" id="UP000006591">
    <property type="component" value="Chloroplast"/>
</dbReference>
<dbReference type="GO" id="GO:0009535">
    <property type="term" value="C:chloroplast thylakoid membrane"/>
    <property type="evidence" value="ECO:0007669"/>
    <property type="project" value="UniProtKB-SubCell"/>
</dbReference>
<dbReference type="GO" id="GO:0005886">
    <property type="term" value="C:plasma membrane"/>
    <property type="evidence" value="ECO:0007669"/>
    <property type="project" value="UniProtKB-UniRule"/>
</dbReference>
<dbReference type="GO" id="GO:0009536">
    <property type="term" value="C:plastid"/>
    <property type="evidence" value="ECO:0000305"/>
    <property type="project" value="Gramene"/>
</dbReference>
<dbReference type="GO" id="GO:0045259">
    <property type="term" value="C:proton-transporting ATP synthase complex"/>
    <property type="evidence" value="ECO:0007669"/>
    <property type="project" value="UniProtKB-KW"/>
</dbReference>
<dbReference type="GO" id="GO:0046933">
    <property type="term" value="F:proton-transporting ATP synthase activity, rotational mechanism"/>
    <property type="evidence" value="ECO:0007669"/>
    <property type="project" value="UniProtKB-UniRule"/>
</dbReference>
<dbReference type="CDD" id="cd00310">
    <property type="entry name" value="ATP-synt_Fo_a_6"/>
    <property type="match status" value="1"/>
</dbReference>
<dbReference type="FunFam" id="1.20.120.220:FF:000001">
    <property type="entry name" value="ATP synthase subunit a, chloroplastic"/>
    <property type="match status" value="1"/>
</dbReference>
<dbReference type="Gene3D" id="1.20.120.220">
    <property type="entry name" value="ATP synthase, F0 complex, subunit A"/>
    <property type="match status" value="1"/>
</dbReference>
<dbReference type="HAMAP" id="MF_01393">
    <property type="entry name" value="ATP_synth_a_bact"/>
    <property type="match status" value="1"/>
</dbReference>
<dbReference type="InterPro" id="IPR045082">
    <property type="entry name" value="ATP_syn_F0_a_bact/chloroplast"/>
</dbReference>
<dbReference type="InterPro" id="IPR000568">
    <property type="entry name" value="ATP_synth_F0_asu"/>
</dbReference>
<dbReference type="InterPro" id="IPR023011">
    <property type="entry name" value="ATP_synth_F0_asu_AS"/>
</dbReference>
<dbReference type="InterPro" id="IPR035908">
    <property type="entry name" value="F0_ATP_A_sf"/>
</dbReference>
<dbReference type="NCBIfam" id="TIGR01131">
    <property type="entry name" value="ATP_synt_6_or_A"/>
    <property type="match status" value="1"/>
</dbReference>
<dbReference type="PANTHER" id="PTHR42823">
    <property type="entry name" value="ATP SYNTHASE SUBUNIT A, CHLOROPLASTIC"/>
    <property type="match status" value="1"/>
</dbReference>
<dbReference type="PANTHER" id="PTHR42823:SF3">
    <property type="entry name" value="ATP SYNTHASE SUBUNIT A, CHLOROPLASTIC"/>
    <property type="match status" value="1"/>
</dbReference>
<dbReference type="Pfam" id="PF00119">
    <property type="entry name" value="ATP-synt_A"/>
    <property type="match status" value="1"/>
</dbReference>
<dbReference type="PRINTS" id="PR00123">
    <property type="entry name" value="ATPASEA"/>
</dbReference>
<dbReference type="SUPFAM" id="SSF81336">
    <property type="entry name" value="F1F0 ATP synthase subunit A"/>
    <property type="match status" value="1"/>
</dbReference>
<dbReference type="PROSITE" id="PS00449">
    <property type="entry name" value="ATPASE_A"/>
    <property type="match status" value="1"/>
</dbReference>
<feature type="chain" id="PRO_0000002594" description="ATP synthase subunit a, chloroplastic">
    <location>
        <begin position="1"/>
        <end position="247"/>
    </location>
</feature>
<feature type="transmembrane region" description="Helical" evidence="1">
    <location>
        <begin position="38"/>
        <end position="58"/>
    </location>
</feature>
<feature type="transmembrane region" description="Helical" evidence="1">
    <location>
        <begin position="95"/>
        <end position="115"/>
    </location>
</feature>
<feature type="transmembrane region" description="Helical" evidence="1">
    <location>
        <begin position="134"/>
        <end position="154"/>
    </location>
</feature>
<feature type="transmembrane region" description="Helical" evidence="1">
    <location>
        <begin position="199"/>
        <end position="219"/>
    </location>
</feature>
<feature type="transmembrane region" description="Helical" evidence="1">
    <location>
        <begin position="220"/>
        <end position="240"/>
    </location>
</feature>
<gene>
    <name evidence="1" type="primary">atpI</name>
</gene>
<accession>Q6ENI0</accession>
<evidence type="ECO:0000255" key="1">
    <source>
        <dbReference type="HAMAP-Rule" id="MF_01393"/>
    </source>
</evidence>
<evidence type="ECO:0000312" key="2">
    <source>
        <dbReference type="Proteomes" id="UP000006591"/>
    </source>
</evidence>
<sequence length="247" mass="27291">MNIIPCSIKTLKGLYDISGVEVGQHFYWQIGGFQIHAQVLITSWVVITILLGSVIIAVRNPQTIPTDGQNFFEYVLEFIRDLSKTQIGEEYGPWVPFIGTMFLFIFVSNWSGALLPWKIIQLPHGELAAPTNDINTTVALALLTSAAYFYAGLSNKGLSYFEKYIKPTPILLPINILEDFTKPLSLSFRLFGNILADELVVVVLVSLVPLVVPIPVMFLGLFTSGIQALIFATLAAAYIGESMEGHH</sequence>